<feature type="signal peptide" evidence="3">
    <location>
        <begin position="1"/>
        <end position="24"/>
    </location>
</feature>
<feature type="chain" id="PRO_0000019908" description="Nucleoside diphosphate phosphatase ENTPD5">
    <location>
        <begin position="25"/>
        <end position="428"/>
    </location>
</feature>
<feature type="active site" description="Proton acceptor" evidence="2">
    <location>
        <position position="172"/>
    </location>
</feature>
<feature type="glycosylation site" description="N-linked (GlcNAc...) asparagine" evidence="8 9">
    <location>
        <position position="232"/>
    </location>
</feature>
<feature type="glycosylation site" description="N-linked (GlcNAc...) asparagine" evidence="3">
    <location>
        <position position="368"/>
    </location>
</feature>
<feature type="disulfide bond" evidence="1">
    <location>
        <begin position="272"/>
        <end position="303"/>
    </location>
</feature>
<feature type="disulfide bond" evidence="1">
    <location>
        <begin position="363"/>
        <end position="377"/>
    </location>
</feature>
<feature type="sequence variant" id="VAR_050308" description="In dbSNP:rs17094434.">
    <original>K</original>
    <variation>R</variation>
    <location>
        <position position="314"/>
    </location>
</feature>
<feature type="mutagenesis site" description="No effect on protein stability. No effect on nucleoside-diphosphatase activity." evidence="7">
    <original>C</original>
    <variation>S</variation>
    <location>
        <position position="39"/>
    </location>
</feature>
<reference key="1">
    <citation type="journal article" date="1998" name="Genomics">
        <title>The CD39-like gene family: identification of three new human members (CD39L2, CD39L3, and CD39L4), their murine homologues, and a member of the gene family from Drosophila melanogaster.</title>
        <authorList>
            <person name="Chadwick B.P."/>
            <person name="Frischauf A.-M."/>
        </authorList>
    </citation>
    <scope>NUCLEOTIDE SEQUENCE [MRNA]</scope>
    <scope>TISSUE SPECIFICITY</scope>
    <source>
        <tissue>Leukemia</tissue>
    </source>
</reference>
<reference key="2">
    <citation type="journal article" date="2000" name="Mol. Carcinog.">
        <title>The human PCPH proto-oncogene: cDNA identification, primary structure, chromosomal mapping, and expression in normal and tumor cells.</title>
        <authorList>
            <person name="Recio J.A."/>
            <person name="Zambrano N."/>
            <person name="Pena L."/>
            <person name="Reig J.A."/>
            <person name="Rhoads A."/>
            <person name="Rouzaut A."/>
            <person name="Notario V."/>
        </authorList>
    </citation>
    <scope>NUCLEOTIDE SEQUENCE [MRNA]</scope>
</reference>
<reference key="3">
    <citation type="journal article" date="2005" name="Biochim. Biophys. Acta">
        <title>Bacterial expression, folding, purification and characterization of soluble NTPDase5 (CD39L4) ecto-nucleotidase.</title>
        <authorList>
            <person name="Murphy-Piedmonte D.M."/>
            <person name="Crawford P.A."/>
            <person name="Kirley T.L."/>
        </authorList>
    </citation>
    <scope>NUCLEOTIDE SEQUENCE [MRNA]</scope>
    <scope>FUNCTION</scope>
    <scope>CATALYTIC ACTIVITY</scope>
    <scope>SUBSTRATE SPECIFICITY</scope>
    <scope>COFACTOR</scope>
    <scope>BIOPHYSICOCHEMICAL PROPERTIES</scope>
    <scope>SUBCELLULAR LOCATION</scope>
    <scope>MUTAGENESIS OF CYS-39</scope>
    <source>
        <tissue>Hippocampus</tissue>
    </source>
</reference>
<reference key="4">
    <citation type="journal article" date="2003" name="Nature">
        <title>The DNA sequence and analysis of human chromosome 14.</title>
        <authorList>
            <person name="Heilig R."/>
            <person name="Eckenberg R."/>
            <person name="Petit J.-L."/>
            <person name="Fonknechten N."/>
            <person name="Da Silva C."/>
            <person name="Cattolico L."/>
            <person name="Levy M."/>
            <person name="Barbe V."/>
            <person name="De Berardinis V."/>
            <person name="Ureta-Vidal A."/>
            <person name="Pelletier E."/>
            <person name="Vico V."/>
            <person name="Anthouard V."/>
            <person name="Rowen L."/>
            <person name="Madan A."/>
            <person name="Qin S."/>
            <person name="Sun H."/>
            <person name="Du H."/>
            <person name="Pepin K."/>
            <person name="Artiguenave F."/>
            <person name="Robert C."/>
            <person name="Cruaud C."/>
            <person name="Bruels T."/>
            <person name="Jaillon O."/>
            <person name="Friedlander L."/>
            <person name="Samson G."/>
            <person name="Brottier P."/>
            <person name="Cure S."/>
            <person name="Segurens B."/>
            <person name="Aniere F."/>
            <person name="Samain S."/>
            <person name="Crespeau H."/>
            <person name="Abbasi N."/>
            <person name="Aiach N."/>
            <person name="Boscus D."/>
            <person name="Dickhoff R."/>
            <person name="Dors M."/>
            <person name="Dubois I."/>
            <person name="Friedman C."/>
            <person name="Gouyvenoux M."/>
            <person name="James R."/>
            <person name="Madan A."/>
            <person name="Mairey-Estrada B."/>
            <person name="Mangenot S."/>
            <person name="Martins N."/>
            <person name="Menard M."/>
            <person name="Oztas S."/>
            <person name="Ratcliffe A."/>
            <person name="Shaffer T."/>
            <person name="Trask B."/>
            <person name="Vacherie B."/>
            <person name="Bellemere C."/>
            <person name="Belser C."/>
            <person name="Besnard-Gonnet M."/>
            <person name="Bartol-Mavel D."/>
            <person name="Boutard M."/>
            <person name="Briez-Silla S."/>
            <person name="Combette S."/>
            <person name="Dufosse-Laurent V."/>
            <person name="Ferron C."/>
            <person name="Lechaplais C."/>
            <person name="Louesse C."/>
            <person name="Muselet D."/>
            <person name="Magdelenat G."/>
            <person name="Pateau E."/>
            <person name="Petit E."/>
            <person name="Sirvain-Trukniewicz P."/>
            <person name="Trybou A."/>
            <person name="Vega-Czarny N."/>
            <person name="Bataille E."/>
            <person name="Bluet E."/>
            <person name="Bordelais I."/>
            <person name="Dubois M."/>
            <person name="Dumont C."/>
            <person name="Guerin T."/>
            <person name="Haffray S."/>
            <person name="Hammadi R."/>
            <person name="Muanga J."/>
            <person name="Pellouin V."/>
            <person name="Robert D."/>
            <person name="Wunderle E."/>
            <person name="Gauguet G."/>
            <person name="Roy A."/>
            <person name="Sainte-Marthe L."/>
            <person name="Verdier J."/>
            <person name="Verdier-Discala C."/>
            <person name="Hillier L.W."/>
            <person name="Fulton L."/>
            <person name="McPherson J."/>
            <person name="Matsuda F."/>
            <person name="Wilson R."/>
            <person name="Scarpelli C."/>
            <person name="Gyapay G."/>
            <person name="Wincker P."/>
            <person name="Saurin W."/>
            <person name="Quetier F."/>
            <person name="Waterston R."/>
            <person name="Hood L."/>
            <person name="Weissenbach J."/>
        </authorList>
    </citation>
    <scope>NUCLEOTIDE SEQUENCE [LARGE SCALE GENOMIC DNA]</scope>
</reference>
<reference key="5">
    <citation type="submission" date="2005-07" db="EMBL/GenBank/DDBJ databases">
        <authorList>
            <person name="Mural R.J."/>
            <person name="Istrail S."/>
            <person name="Sutton G.G."/>
            <person name="Florea L."/>
            <person name="Halpern A.L."/>
            <person name="Mobarry C.M."/>
            <person name="Lippert R."/>
            <person name="Walenz B."/>
            <person name="Shatkay H."/>
            <person name="Dew I."/>
            <person name="Miller J.R."/>
            <person name="Flanigan M.J."/>
            <person name="Edwards N.J."/>
            <person name="Bolanos R."/>
            <person name="Fasulo D."/>
            <person name="Halldorsson B.V."/>
            <person name="Hannenhalli S."/>
            <person name="Turner R."/>
            <person name="Yooseph S."/>
            <person name="Lu F."/>
            <person name="Nusskern D.R."/>
            <person name="Shue B.C."/>
            <person name="Zheng X.H."/>
            <person name="Zhong F."/>
            <person name="Delcher A.L."/>
            <person name="Huson D.H."/>
            <person name="Kravitz S.A."/>
            <person name="Mouchard L."/>
            <person name="Reinert K."/>
            <person name="Remington K.A."/>
            <person name="Clark A.G."/>
            <person name="Waterman M.S."/>
            <person name="Eichler E.E."/>
            <person name="Adams M.D."/>
            <person name="Hunkapiller M.W."/>
            <person name="Myers E.W."/>
            <person name="Venter J.C."/>
        </authorList>
    </citation>
    <scope>NUCLEOTIDE SEQUENCE [LARGE SCALE GENOMIC DNA]</scope>
</reference>
<reference key="6">
    <citation type="journal article" date="2004" name="Genome Res.">
        <title>The status, quality, and expansion of the NIH full-length cDNA project: the Mammalian Gene Collection (MGC).</title>
        <authorList>
            <consortium name="The MGC Project Team"/>
        </authorList>
    </citation>
    <scope>NUCLEOTIDE SEQUENCE [LARGE SCALE MRNA]</scope>
</reference>
<reference key="7">
    <citation type="journal article" date="1999" name="J. Biol. Chem.">
        <title>CD39-L4 is a secreted human apyrase, specific for the hydrolysis of nucleoside diphosphates.</title>
        <authorList>
            <person name="Mulero J.J."/>
            <person name="Yeung G."/>
            <person name="Nelken S.T."/>
            <person name="Ford J.E."/>
        </authorList>
    </citation>
    <scope>FUNCTION</scope>
    <scope>CATALYTIC ACTIVITY</scope>
    <scope>SUBSTRATE SPECIFICITY</scope>
    <scope>COFACTOR</scope>
    <scope>SUBCELLULAR LOCATION</scope>
</reference>
<reference key="8">
    <citation type="journal article" date="2000" name="Biochemistry">
        <title>Biochemical characterization of CD39L4.</title>
        <authorList>
            <person name="Mulero J.J."/>
            <person name="Yeung G."/>
            <person name="Nelken S.T."/>
            <person name="Bright J.M."/>
            <person name="McGowan D.W."/>
            <person name="Ford J.E."/>
        </authorList>
    </citation>
    <scope>GLYCOSYLATION</scope>
    <scope>SUBUNIT</scope>
</reference>
<reference key="9">
    <citation type="journal article" date="2005" name="J. Proteome Res.">
        <title>Human plasma N-glycoproteome analysis by immunoaffinity subtraction, hydrazide chemistry, and mass spectrometry.</title>
        <authorList>
            <person name="Liu T."/>
            <person name="Qian W.-J."/>
            <person name="Gritsenko M.A."/>
            <person name="Camp D.G. II"/>
            <person name="Monroe M.E."/>
            <person name="Moore R.J."/>
            <person name="Smith R.D."/>
        </authorList>
    </citation>
    <scope>GLYCOSYLATION [LARGE SCALE ANALYSIS] AT ASN-232</scope>
    <source>
        <tissue>Plasma</tissue>
    </source>
</reference>
<reference key="10">
    <citation type="journal article" date="2009" name="J. Proteome Res.">
        <title>Glycoproteomics analysis of human liver tissue by combination of multiple enzyme digestion and hydrazide chemistry.</title>
        <authorList>
            <person name="Chen R."/>
            <person name="Jiang X."/>
            <person name="Sun D."/>
            <person name="Han G."/>
            <person name="Wang F."/>
            <person name="Ye M."/>
            <person name="Wang L."/>
            <person name="Zou H."/>
        </authorList>
    </citation>
    <scope>GLYCOSYLATION [LARGE SCALE ANALYSIS] AT ASN-232</scope>
    <source>
        <tissue>Liver</tissue>
    </source>
</reference>
<reference key="11">
    <citation type="journal article" date="2010" name="Cell">
        <title>The ER UDPase ENTPD5 promotes protein N-glycosylation, the Warburg effect, and proliferation in the PTEN pathway.</title>
        <authorList>
            <person name="Fang M."/>
            <person name="Shen Z."/>
            <person name="Huang S."/>
            <person name="Zhao L."/>
            <person name="Chen S."/>
            <person name="Mak T.W."/>
            <person name="Wang X."/>
        </authorList>
    </citation>
    <scope>INDUCTION</scope>
</reference>
<reference key="12">
    <citation type="journal article" date="2014" name="J. Proteomics">
        <title>An enzyme assisted RP-RPLC approach for in-depth analysis of human liver phosphoproteome.</title>
        <authorList>
            <person name="Bian Y."/>
            <person name="Song C."/>
            <person name="Cheng K."/>
            <person name="Dong M."/>
            <person name="Wang F."/>
            <person name="Huang J."/>
            <person name="Sun D."/>
            <person name="Wang L."/>
            <person name="Ye M."/>
            <person name="Zou H."/>
        </authorList>
    </citation>
    <scope>IDENTIFICATION BY MASS SPECTROMETRY [LARGE SCALE ANALYSIS]</scope>
    <source>
        <tissue>Liver</tissue>
    </source>
</reference>
<evidence type="ECO:0000250" key="1"/>
<evidence type="ECO:0000250" key="2">
    <source>
        <dbReference type="UniProtKB" id="Q9WUZ9"/>
    </source>
</evidence>
<evidence type="ECO:0000255" key="3"/>
<evidence type="ECO:0000269" key="4">
    <source>
    </source>
</evidence>
<evidence type="ECO:0000269" key="5">
    <source>
    </source>
</evidence>
<evidence type="ECO:0000269" key="6">
    <source>
    </source>
</evidence>
<evidence type="ECO:0000269" key="7">
    <source>
    </source>
</evidence>
<evidence type="ECO:0000269" key="8">
    <source>
    </source>
</evidence>
<evidence type="ECO:0000269" key="9">
    <source>
    </source>
</evidence>
<evidence type="ECO:0000269" key="10">
    <source>
    </source>
</evidence>
<evidence type="ECO:0000269" key="11">
    <source>
    </source>
</evidence>
<evidence type="ECO:0000303" key="12">
    <source>
    </source>
</evidence>
<evidence type="ECO:0000303" key="13">
    <source>
    </source>
</evidence>
<evidence type="ECO:0000305" key="14"/>
<evidence type="ECO:0000305" key="15">
    <source>
    </source>
</evidence>
<evidence type="ECO:0000305" key="16">
    <source>
    </source>
</evidence>
<evidence type="ECO:0000305" key="17">
    <source>
    </source>
</evidence>
<evidence type="ECO:0000312" key="18">
    <source>
        <dbReference type="HGNC" id="HGNC:3367"/>
    </source>
</evidence>
<proteinExistence type="evidence at protein level"/>
<sequence>MATSWGTVFFMLVVSCVCSAVSHRNQQTWFEGIFLSSMCPINVSASTLYGIMFDAGSTGTRIHVYTFVQKMPGQLPILEGEVFDSVKPGLSAFVDQPKQGAETVQGLLEVAKDSIPRSHWKKTPVVLKATAGLRLLPEHKAKALLFEVKEIFRKSPFLVPKGSVSIMDGSDEGILAWVTVNFLTGQLHGHRQETVGTLDLGGASTQITFLPQFEKTLEQTPRGYLTSFEMFNSTYKLYTHSYLGFGLKAARLATLGALETEGTDGHTFRSACLPRWLEAEWIFGGVKYQYGGNQEGEVGFEPCYAEVLRVVRGKLHQPEEVQRGSFYAFSYYYDRAVDTDMIDYEKGGILKVEDFERKAREVCDNLENFTSGSPFLCMDLSYITALLKDGFGFADSTVLQLTKKVNNIETGWALGATFHLLQSLGISH</sequence>
<name>ENTP5_HUMAN</name>
<organism>
    <name type="scientific">Homo sapiens</name>
    <name type="common">Human</name>
    <dbReference type="NCBI Taxonomy" id="9606"/>
    <lineage>
        <taxon>Eukaryota</taxon>
        <taxon>Metazoa</taxon>
        <taxon>Chordata</taxon>
        <taxon>Craniata</taxon>
        <taxon>Vertebrata</taxon>
        <taxon>Euteleostomi</taxon>
        <taxon>Mammalia</taxon>
        <taxon>Eutheria</taxon>
        <taxon>Euarchontoglires</taxon>
        <taxon>Primates</taxon>
        <taxon>Haplorrhini</taxon>
        <taxon>Catarrhini</taxon>
        <taxon>Hominidae</taxon>
        <taxon>Homo</taxon>
    </lineage>
</organism>
<accession>O75356</accession>
<accession>A1L4C5</accession>
<accession>Q96RX0</accession>
<comment type="function">
    <text evidence="2 4 7">Hydrolyzes nucleoside diphosphates with a preference for GDP, IDP and UDP compared to ADP and CDP (PubMed:10400613, PubMed:15698960). In the lumen of the endoplasmic reticulum, hydrolyzes UDP that acts as an end-product feedback inhibitor of the UDP-Glc:glycoprotein glucosyltransferases. UMP can be transported back by an UDP-sugar antiporter to the cytosol where it is consumed to regenerate UDP-glucose. Therefore, it positively regulates protein reglucosylation by clearing UDP from the ER lumen and by promoting the regeneration of UDP-glucose. Protein reglucosylation is essential to proper glycoprotein folding and quality control in the ER (By similarity).</text>
</comment>
<comment type="catalytic activity">
    <reaction evidence="4 7">
        <text>a ribonucleoside 5'-diphosphate + H2O = a ribonucleoside 5'-phosphate + phosphate + H(+)</text>
        <dbReference type="Rhea" id="RHEA:36799"/>
        <dbReference type="ChEBI" id="CHEBI:15377"/>
        <dbReference type="ChEBI" id="CHEBI:15378"/>
        <dbReference type="ChEBI" id="CHEBI:43474"/>
        <dbReference type="ChEBI" id="CHEBI:57930"/>
        <dbReference type="ChEBI" id="CHEBI:58043"/>
        <dbReference type="EC" id="3.6.1.6"/>
    </reaction>
    <physiologicalReaction direction="left-to-right" evidence="16">
        <dbReference type="Rhea" id="RHEA:36800"/>
    </physiologicalReaction>
</comment>
<comment type="catalytic activity">
    <reaction evidence="7">
        <text>GDP + H2O = GMP + phosphate + H(+)</text>
        <dbReference type="Rhea" id="RHEA:22156"/>
        <dbReference type="ChEBI" id="CHEBI:15377"/>
        <dbReference type="ChEBI" id="CHEBI:15378"/>
        <dbReference type="ChEBI" id="CHEBI:43474"/>
        <dbReference type="ChEBI" id="CHEBI:58115"/>
        <dbReference type="ChEBI" id="CHEBI:58189"/>
        <dbReference type="EC" id="3.6.1.6"/>
    </reaction>
    <physiologicalReaction direction="left-to-right" evidence="16">
        <dbReference type="Rhea" id="RHEA:22157"/>
    </physiologicalReaction>
</comment>
<comment type="catalytic activity">
    <reaction evidence="7">
        <text>UDP + H2O = UMP + phosphate + H(+)</text>
        <dbReference type="Rhea" id="RHEA:64876"/>
        <dbReference type="ChEBI" id="CHEBI:15377"/>
        <dbReference type="ChEBI" id="CHEBI:15378"/>
        <dbReference type="ChEBI" id="CHEBI:43474"/>
        <dbReference type="ChEBI" id="CHEBI:57865"/>
        <dbReference type="ChEBI" id="CHEBI:58223"/>
        <dbReference type="EC" id="3.6.1.6"/>
    </reaction>
    <physiologicalReaction direction="left-to-right" evidence="16">
        <dbReference type="Rhea" id="RHEA:64877"/>
    </physiologicalReaction>
</comment>
<comment type="catalytic activity">
    <reaction evidence="7">
        <text>IDP + H2O = IMP + phosphate + H(+)</text>
        <dbReference type="Rhea" id="RHEA:35207"/>
        <dbReference type="ChEBI" id="CHEBI:15377"/>
        <dbReference type="ChEBI" id="CHEBI:15378"/>
        <dbReference type="ChEBI" id="CHEBI:43474"/>
        <dbReference type="ChEBI" id="CHEBI:58053"/>
        <dbReference type="ChEBI" id="CHEBI:58280"/>
        <dbReference type="EC" id="3.6.1.6"/>
    </reaction>
    <physiologicalReaction direction="left-to-right" evidence="16">
        <dbReference type="Rhea" id="RHEA:35208"/>
    </physiologicalReaction>
</comment>
<comment type="catalytic activity">
    <reaction evidence="4">
        <text>CDP + H2O = CMP + phosphate + H(+)</text>
        <dbReference type="Rhea" id="RHEA:64880"/>
        <dbReference type="ChEBI" id="CHEBI:15377"/>
        <dbReference type="ChEBI" id="CHEBI:15378"/>
        <dbReference type="ChEBI" id="CHEBI:43474"/>
        <dbReference type="ChEBI" id="CHEBI:58069"/>
        <dbReference type="ChEBI" id="CHEBI:60377"/>
        <dbReference type="EC" id="3.6.1.6"/>
    </reaction>
    <physiologicalReaction direction="left-to-right" evidence="15">
        <dbReference type="Rhea" id="RHEA:64881"/>
    </physiologicalReaction>
</comment>
<comment type="catalytic activity">
    <reaction evidence="4">
        <text>ADP + H2O = AMP + phosphate + H(+)</text>
        <dbReference type="Rhea" id="RHEA:61436"/>
        <dbReference type="ChEBI" id="CHEBI:15377"/>
        <dbReference type="ChEBI" id="CHEBI:15378"/>
        <dbReference type="ChEBI" id="CHEBI:43474"/>
        <dbReference type="ChEBI" id="CHEBI:456215"/>
        <dbReference type="ChEBI" id="CHEBI:456216"/>
        <dbReference type="EC" id="3.6.1.6"/>
    </reaction>
    <physiologicalReaction direction="left-to-right" evidence="15">
        <dbReference type="Rhea" id="RHEA:61437"/>
    </physiologicalReaction>
</comment>
<comment type="cofactor">
    <cofactor evidence="4 7">
        <name>Ca(2+)</name>
        <dbReference type="ChEBI" id="CHEBI:29108"/>
    </cofactor>
    <cofactor evidence="4 7">
        <name>Mg(2+)</name>
        <dbReference type="ChEBI" id="CHEBI:18420"/>
    </cofactor>
</comment>
<comment type="biophysicochemical properties">
    <kinetics>
        <KM evidence="7">0.14 mM for GDP</KM>
        <Vmax evidence="7">34.0 mmol/h/mg enzyme with GDP as substrate</Vmax>
    </kinetics>
    <phDependence>
        <text evidence="7">Optimum pH is 7.5-8.0.</text>
    </phDependence>
</comment>
<comment type="pathway">
    <text evidence="2">Protein modification; protein glycosylation.</text>
</comment>
<comment type="subunit">
    <text evidence="5 6">Monomer; active form (PubMed:12508121). Homodimer; disulfide-linked. Homodimers are enzymatically inactive.</text>
</comment>
<comment type="interaction">
    <interactant intactId="EBI-7416931">
        <id>O75356</id>
    </interactant>
    <interactant intactId="EBI-466029">
        <id>P42858</id>
        <label>HTT</label>
    </interactant>
    <organismsDiffer>false</organismsDiffer>
    <experiments>3</experiments>
</comment>
<comment type="interaction">
    <interactant intactId="EBI-7416931">
        <id>O75356</id>
    </interactant>
    <interactant intactId="EBI-752241">
        <id>P50539</id>
        <label>MXI1</label>
    </interactant>
    <organismsDiffer>false</organismsDiffer>
    <experiments>3</experiments>
</comment>
<comment type="subcellular location">
    <subcellularLocation>
        <location evidence="2">Endoplasmic reticulum</location>
    </subcellularLocation>
    <subcellularLocation>
        <location evidence="4 7">Secreted</location>
    </subcellularLocation>
</comment>
<comment type="tissue specificity">
    <text evidence="11">Expressed in adult liver, kidney, prostate, testis and colon. Much weaker expression in other tissues.</text>
</comment>
<comment type="induction">
    <text evidence="10">Up-regulated in cell lines and primary tumor samples with active AKT1.</text>
</comment>
<comment type="PTM">
    <text evidence="2 5 8 9">N-glycosylated; high-mannose type (By similarity). Glycosylation is not essential for enzymatic activity.</text>
</comment>
<comment type="miscellaneous">
    <text evidence="17">May mediate some of the cancer-related phenotypes associated with AKT1 activation: its up-regulation by AKT1 leads to the elevation of aerobic glycolysis seen in tumor cells, a phenomenon known as the Warburg effect.</text>
</comment>
<comment type="similarity">
    <text evidence="14">Belongs to the GDA1/CD39 NTPase family.</text>
</comment>
<dbReference type="EC" id="3.6.1.6" evidence="4 7"/>
<dbReference type="EMBL" id="AF039918">
    <property type="protein sequence ID" value="AAC39885.1"/>
    <property type="molecule type" value="mRNA"/>
</dbReference>
<dbReference type="EMBL" id="AF136572">
    <property type="protein sequence ID" value="AAK82950.1"/>
    <property type="molecule type" value="mRNA"/>
</dbReference>
<dbReference type="EMBL" id="AY430094">
    <property type="protein sequence ID" value="AAR06666.1"/>
    <property type="molecule type" value="mRNA"/>
</dbReference>
<dbReference type="EMBL" id="AC005480">
    <property type="status" value="NOT_ANNOTATED_CDS"/>
    <property type="molecule type" value="Genomic_DNA"/>
</dbReference>
<dbReference type="EMBL" id="CH471061">
    <property type="protein sequence ID" value="EAW81153.1"/>
    <property type="molecule type" value="Genomic_DNA"/>
</dbReference>
<dbReference type="EMBL" id="BC130485">
    <property type="protein sequence ID" value="AAI30486.1"/>
    <property type="molecule type" value="mRNA"/>
</dbReference>
<dbReference type="EMBL" id="BC130487">
    <property type="protein sequence ID" value="AAI30488.1"/>
    <property type="molecule type" value="mRNA"/>
</dbReference>
<dbReference type="CCDS" id="CCDS9825.1"/>
<dbReference type="RefSeq" id="NP_001240.1">
    <property type="nucleotide sequence ID" value="NM_001249.5"/>
</dbReference>
<dbReference type="RefSeq" id="NP_001308914.1">
    <property type="nucleotide sequence ID" value="NM_001321985.3"/>
</dbReference>
<dbReference type="RefSeq" id="NP_001308915.1">
    <property type="nucleotide sequence ID" value="NM_001321986.3"/>
</dbReference>
<dbReference type="RefSeq" id="NP_001308916.1">
    <property type="nucleotide sequence ID" value="NM_001321987.3"/>
</dbReference>
<dbReference type="RefSeq" id="NP_001308917.1">
    <property type="nucleotide sequence ID" value="NM_001321988.3"/>
</dbReference>
<dbReference type="RefSeq" id="NP_001369185.1">
    <property type="nucleotide sequence ID" value="NM_001382256.1"/>
</dbReference>
<dbReference type="RefSeq" id="NP_001369186.1">
    <property type="nucleotide sequence ID" value="NM_001382257.1"/>
</dbReference>
<dbReference type="RefSeq" id="XP_005268281.1">
    <property type="nucleotide sequence ID" value="XM_005268224.3"/>
</dbReference>
<dbReference type="RefSeq" id="XP_016877302.1">
    <property type="nucleotide sequence ID" value="XM_017021813.1"/>
</dbReference>
<dbReference type="SMR" id="O75356"/>
<dbReference type="BioGRID" id="107395">
    <property type="interactions" value="13"/>
</dbReference>
<dbReference type="FunCoup" id="O75356">
    <property type="interactions" value="1220"/>
</dbReference>
<dbReference type="IntAct" id="O75356">
    <property type="interactions" value="11"/>
</dbReference>
<dbReference type="MINT" id="O75356"/>
<dbReference type="STRING" id="9606.ENSP00000335246"/>
<dbReference type="ChEMBL" id="CHEMBL4523151"/>
<dbReference type="DrugBank" id="DB00152">
    <property type="generic name" value="Thiamine"/>
</dbReference>
<dbReference type="GlyConnect" id="1194">
    <property type="glycosylation" value="3 N-Linked glycans (1 site)"/>
</dbReference>
<dbReference type="GlyCosmos" id="O75356">
    <property type="glycosylation" value="2 sites, 3 glycans"/>
</dbReference>
<dbReference type="GlyGen" id="O75356">
    <property type="glycosylation" value="2 sites, 16 N-linked glycans (1 site)"/>
</dbReference>
<dbReference type="iPTMnet" id="O75356"/>
<dbReference type="PhosphoSitePlus" id="O75356"/>
<dbReference type="BioMuta" id="ENTPD5"/>
<dbReference type="jPOST" id="O75356"/>
<dbReference type="MassIVE" id="O75356"/>
<dbReference type="PaxDb" id="9606-ENSP00000335246"/>
<dbReference type="PeptideAtlas" id="O75356"/>
<dbReference type="ProteomicsDB" id="49923"/>
<dbReference type="Antibodypedia" id="148">
    <property type="antibodies" value="256 antibodies from 31 providers"/>
</dbReference>
<dbReference type="DNASU" id="957"/>
<dbReference type="Ensembl" id="ENST00000334696.11">
    <property type="protein sequence ID" value="ENSP00000335246.6"/>
    <property type="gene ID" value="ENSG00000187097.13"/>
</dbReference>
<dbReference type="GeneID" id="957"/>
<dbReference type="KEGG" id="hsa:957"/>
<dbReference type="MANE-Select" id="ENST00000334696.11">
    <property type="protein sequence ID" value="ENSP00000335246.6"/>
    <property type="RefSeq nucleotide sequence ID" value="NM_001249.5"/>
    <property type="RefSeq protein sequence ID" value="NP_001240.1"/>
</dbReference>
<dbReference type="UCSC" id="uc010tuo.3">
    <property type="organism name" value="human"/>
</dbReference>
<dbReference type="AGR" id="HGNC:3367"/>
<dbReference type="CTD" id="957"/>
<dbReference type="DisGeNET" id="957"/>
<dbReference type="GeneCards" id="ENTPD5"/>
<dbReference type="HGNC" id="HGNC:3367">
    <property type="gene designation" value="ENTPD5"/>
</dbReference>
<dbReference type="HPA" id="ENSG00000187097">
    <property type="expression patterns" value="Tissue enhanced (intestine, kidney, liver)"/>
</dbReference>
<dbReference type="MalaCards" id="ENTPD5"/>
<dbReference type="MIM" id="603162">
    <property type="type" value="gene"/>
</dbReference>
<dbReference type="neXtProt" id="NX_O75356"/>
<dbReference type="OpenTargets" id="ENSG00000187097"/>
<dbReference type="PharmGKB" id="PA27802"/>
<dbReference type="VEuPathDB" id="HostDB:ENSG00000187097"/>
<dbReference type="eggNOG" id="KOG1385">
    <property type="taxonomic scope" value="Eukaryota"/>
</dbReference>
<dbReference type="GeneTree" id="ENSGT01110000267162"/>
<dbReference type="HOGENOM" id="CLU_010246_0_2_1"/>
<dbReference type="InParanoid" id="O75356"/>
<dbReference type="OMA" id="WTCRIKE"/>
<dbReference type="OrthoDB" id="6372431at2759"/>
<dbReference type="PAN-GO" id="O75356">
    <property type="GO annotations" value="4 GO annotations based on evolutionary models"/>
</dbReference>
<dbReference type="PhylomeDB" id="O75356"/>
<dbReference type="TreeFam" id="TF315029"/>
<dbReference type="PathwayCommons" id="O75356"/>
<dbReference type="Reactome" id="R-HSA-8850843">
    <property type="pathway name" value="Phosphate bond hydrolysis by NTPDase proteins"/>
</dbReference>
<dbReference type="Reactome" id="R-HSA-9660826">
    <property type="pathway name" value="Purinergic signaling in leishmaniasis infection"/>
</dbReference>
<dbReference type="SignaLink" id="O75356"/>
<dbReference type="UniPathway" id="UPA00378"/>
<dbReference type="BioGRID-ORCS" id="957">
    <property type="hits" value="7 hits in 1155 CRISPR screens"/>
</dbReference>
<dbReference type="ChiTaRS" id="ENTPD5">
    <property type="organism name" value="human"/>
</dbReference>
<dbReference type="GeneWiki" id="ENTPD5"/>
<dbReference type="GenomeRNAi" id="957"/>
<dbReference type="Pharos" id="O75356">
    <property type="development level" value="Tbio"/>
</dbReference>
<dbReference type="PRO" id="PR:O75356"/>
<dbReference type="Proteomes" id="UP000005640">
    <property type="component" value="Chromosome 14"/>
</dbReference>
<dbReference type="RNAct" id="O75356">
    <property type="molecule type" value="protein"/>
</dbReference>
<dbReference type="Bgee" id="ENSG00000187097">
    <property type="expression patterns" value="Expressed in mucosa of sigmoid colon and 182 other cell types or tissues"/>
</dbReference>
<dbReference type="ExpressionAtlas" id="O75356">
    <property type="expression patterns" value="baseline and differential"/>
</dbReference>
<dbReference type="GO" id="GO:0005783">
    <property type="term" value="C:endoplasmic reticulum"/>
    <property type="evidence" value="ECO:0000250"/>
    <property type="project" value="UniProtKB"/>
</dbReference>
<dbReference type="GO" id="GO:0005576">
    <property type="term" value="C:extracellular region"/>
    <property type="evidence" value="ECO:0000314"/>
    <property type="project" value="UniProtKB"/>
</dbReference>
<dbReference type="GO" id="GO:0005615">
    <property type="term" value="C:extracellular space"/>
    <property type="evidence" value="ECO:0000314"/>
    <property type="project" value="UniProtKB"/>
</dbReference>
<dbReference type="GO" id="GO:0043262">
    <property type="term" value="F:ADP phosphatase activity"/>
    <property type="evidence" value="ECO:0000314"/>
    <property type="project" value="UniProtKB"/>
</dbReference>
<dbReference type="GO" id="GO:0036384">
    <property type="term" value="F:CDP phosphatase activity"/>
    <property type="evidence" value="ECO:0000314"/>
    <property type="project" value="UniProtKB"/>
</dbReference>
<dbReference type="GO" id="GO:0004382">
    <property type="term" value="F:GDP phosphatase activity"/>
    <property type="evidence" value="ECO:0000314"/>
    <property type="project" value="UniProtKB"/>
</dbReference>
<dbReference type="GO" id="GO:1990003">
    <property type="term" value="F:IDP phosphatase activity"/>
    <property type="evidence" value="ECO:0000314"/>
    <property type="project" value="UniProtKB"/>
</dbReference>
<dbReference type="GO" id="GO:0045134">
    <property type="term" value="F:UDP phosphatase activity"/>
    <property type="evidence" value="ECO:0000314"/>
    <property type="project" value="UniProtKB"/>
</dbReference>
<dbReference type="GO" id="GO:0051084">
    <property type="term" value="P:'de novo' post-translational protein folding"/>
    <property type="evidence" value="ECO:0000250"/>
    <property type="project" value="UniProtKB"/>
</dbReference>
<dbReference type="GO" id="GO:0006487">
    <property type="term" value="P:protein N-linked glycosylation"/>
    <property type="evidence" value="ECO:0000250"/>
    <property type="project" value="UniProtKB"/>
</dbReference>
<dbReference type="GO" id="GO:0006256">
    <property type="term" value="P:UDP catabolic process"/>
    <property type="evidence" value="ECO:0000250"/>
    <property type="project" value="UniProtKB"/>
</dbReference>
<dbReference type="GO" id="GO:0006011">
    <property type="term" value="P:UDP-alpha-D-glucose metabolic process"/>
    <property type="evidence" value="ECO:0000250"/>
    <property type="project" value="UniProtKB"/>
</dbReference>
<dbReference type="CDD" id="cd24114">
    <property type="entry name" value="ASKHA_NBD_NTPDase5"/>
    <property type="match status" value="1"/>
</dbReference>
<dbReference type="FunFam" id="3.30.420.150:FF:000004">
    <property type="entry name" value="Ectonucleoside triphosphate diphosphohydrolase 5"/>
    <property type="match status" value="1"/>
</dbReference>
<dbReference type="FunFam" id="3.30.420.40:FF:000052">
    <property type="entry name" value="Ectonucleoside triphosphate diphosphohydrolase 5"/>
    <property type="match status" value="1"/>
</dbReference>
<dbReference type="Gene3D" id="3.30.420.40">
    <property type="match status" value="1"/>
</dbReference>
<dbReference type="Gene3D" id="3.30.420.150">
    <property type="entry name" value="Exopolyphosphatase. Domain 2"/>
    <property type="match status" value="1"/>
</dbReference>
<dbReference type="InterPro" id="IPR000407">
    <property type="entry name" value="GDA1_CD39_NTPase"/>
</dbReference>
<dbReference type="PANTHER" id="PTHR11782">
    <property type="entry name" value="ADENOSINE/GUANOSINE DIPHOSPHATASE"/>
    <property type="match status" value="1"/>
</dbReference>
<dbReference type="PANTHER" id="PTHR11782:SF35">
    <property type="entry name" value="NUCLEOSIDE DIPHOSPHATE PHOSPHATASE ENTPD5"/>
    <property type="match status" value="1"/>
</dbReference>
<dbReference type="Pfam" id="PF01150">
    <property type="entry name" value="GDA1_CD39"/>
    <property type="match status" value="1"/>
</dbReference>
<dbReference type="PROSITE" id="PS01238">
    <property type="entry name" value="GDA1_CD39_NTPASE"/>
    <property type="match status" value="1"/>
</dbReference>
<keyword id="KW-0106">Calcium</keyword>
<keyword id="KW-1015">Disulfide bond</keyword>
<keyword id="KW-0256">Endoplasmic reticulum</keyword>
<keyword id="KW-0325">Glycoprotein</keyword>
<keyword id="KW-0378">Hydrolase</keyword>
<keyword id="KW-0460">Magnesium</keyword>
<keyword id="KW-1267">Proteomics identification</keyword>
<keyword id="KW-0656">Proto-oncogene</keyword>
<keyword id="KW-1185">Reference proteome</keyword>
<keyword id="KW-0964">Secreted</keyword>
<keyword id="KW-0732">Signal</keyword>
<protein>
    <recommendedName>
        <fullName evidence="15 16">Nucleoside diphosphate phosphatase ENTPD5</fullName>
        <ecNumber evidence="4 7">3.6.1.6</ecNumber>
    </recommendedName>
    <alternativeName>
        <fullName>CD39 antigen-like 4</fullName>
    </alternativeName>
    <alternativeName>
        <fullName>ER-UDPase</fullName>
    </alternativeName>
    <alternativeName>
        <fullName evidence="18">Ectonucleoside triphosphate diphosphohydrolase 5</fullName>
        <shortName evidence="12">NTPDase 5</shortName>
    </alternativeName>
    <alternativeName>
        <fullName evidence="14">Guanosine-diphosphatase ENTPD5</fullName>
        <shortName>GDPase ENTPD5</shortName>
    </alternativeName>
    <alternativeName>
        <fullName evidence="14">Inosine diphosphate phosphatase ENTPD5</fullName>
    </alternativeName>
    <alternativeName>
        <fullName>Nucleoside diphosphatase</fullName>
    </alternativeName>
    <alternativeName>
        <fullName>Uridine-diphosphatase ENTPD5</fullName>
        <shortName>UDPase ENTPD5</shortName>
    </alternativeName>
</protein>
<gene>
    <name evidence="18" type="primary">ENTPD5</name>
    <name evidence="13" type="synonym">CD39L4</name>
    <name type="synonym">PCPH</name>
</gene>